<dbReference type="EC" id="2.4.1.115"/>
<dbReference type="EMBL" id="X77369">
    <property type="protein sequence ID" value="CAA54558.1"/>
    <property type="molecule type" value="mRNA"/>
</dbReference>
<dbReference type="PIR" id="S51767">
    <property type="entry name" value="S51767"/>
</dbReference>
<dbReference type="SMR" id="Q43641"/>
<dbReference type="CAZy" id="GT1">
    <property type="family name" value="Glycosyltransferase Family 1"/>
</dbReference>
<dbReference type="UniPathway" id="UPA00009"/>
<dbReference type="GO" id="GO:0047213">
    <property type="term" value="F:anthocyanidin 3-O-glucosyltransferase activity"/>
    <property type="evidence" value="ECO:0007669"/>
    <property type="project" value="UniProtKB-EC"/>
</dbReference>
<dbReference type="GO" id="GO:0080043">
    <property type="term" value="F:quercetin 3-O-glucosyltransferase activity"/>
    <property type="evidence" value="ECO:0007669"/>
    <property type="project" value="TreeGrafter"/>
</dbReference>
<dbReference type="GO" id="GO:0080044">
    <property type="term" value="F:quercetin 7-O-glucosyltransferase activity"/>
    <property type="evidence" value="ECO:0007669"/>
    <property type="project" value="TreeGrafter"/>
</dbReference>
<dbReference type="GO" id="GO:0009718">
    <property type="term" value="P:anthocyanin-containing compound biosynthetic process"/>
    <property type="evidence" value="ECO:0007669"/>
    <property type="project" value="UniProtKB-UniPathway"/>
</dbReference>
<dbReference type="CDD" id="cd03784">
    <property type="entry name" value="GT1_Gtf-like"/>
    <property type="match status" value="1"/>
</dbReference>
<dbReference type="FunFam" id="3.40.50.2000:FF:000091">
    <property type="entry name" value="Glycosyltransferase"/>
    <property type="match status" value="1"/>
</dbReference>
<dbReference type="Gene3D" id="3.40.50.2000">
    <property type="entry name" value="Glycogen Phosphorylase B"/>
    <property type="match status" value="2"/>
</dbReference>
<dbReference type="InterPro" id="IPR002213">
    <property type="entry name" value="UDP_glucos_trans"/>
</dbReference>
<dbReference type="InterPro" id="IPR035595">
    <property type="entry name" value="UDP_glycos_trans_CS"/>
</dbReference>
<dbReference type="PANTHER" id="PTHR11926">
    <property type="entry name" value="GLUCOSYL/GLUCURONOSYL TRANSFERASES"/>
    <property type="match status" value="1"/>
</dbReference>
<dbReference type="PANTHER" id="PTHR11926:SF1560">
    <property type="entry name" value="UDP-GLYCOSYLTRANSFERASE 74E1-RELATED"/>
    <property type="match status" value="1"/>
</dbReference>
<dbReference type="Pfam" id="PF00201">
    <property type="entry name" value="UDPGT"/>
    <property type="match status" value="1"/>
</dbReference>
<dbReference type="SUPFAM" id="SSF53756">
    <property type="entry name" value="UDP-Glycosyltransferase/glycogen phosphorylase"/>
    <property type="match status" value="1"/>
</dbReference>
<dbReference type="PROSITE" id="PS00375">
    <property type="entry name" value="UDPGT"/>
    <property type="match status" value="1"/>
</dbReference>
<name>UFOG_SOLME</name>
<keyword id="KW-0328">Glycosyltransferase</keyword>
<keyword id="KW-0808">Transferase</keyword>
<protein>
    <recommendedName>
        <fullName>Anthocyanidin 3-O-glucosyltransferase</fullName>
        <ecNumber>2.4.1.115</ecNumber>
    </recommendedName>
    <alternativeName>
        <fullName>Flavonol 3-O-glucosyltransferase</fullName>
    </alternativeName>
    <alternativeName>
        <fullName>UDP-glucose flavonoid 3-O-glucosyltransferase</fullName>
    </alternativeName>
</protein>
<evidence type="ECO:0000250" key="1"/>
<evidence type="ECO:0000250" key="2">
    <source>
        <dbReference type="UniProtKB" id="A0A0A1HA03"/>
    </source>
</evidence>
<evidence type="ECO:0000250" key="3">
    <source>
        <dbReference type="UniProtKB" id="P51094"/>
    </source>
</evidence>
<evidence type="ECO:0000305" key="4"/>
<comment type="function">
    <text evidence="1">In the presence of other necessary color factors, this glycosylation reaction allows the accumulation of anthocyanin pigments.</text>
</comment>
<comment type="catalytic activity">
    <reaction>
        <text>an anthocyanidin + UDP-alpha-D-glucose + H(+) = an anthocyanidin 3-O-beta-D-glucoside + UDP</text>
        <dbReference type="Rhea" id="RHEA:20093"/>
        <dbReference type="ChEBI" id="CHEBI:15378"/>
        <dbReference type="ChEBI" id="CHEBI:16307"/>
        <dbReference type="ChEBI" id="CHEBI:58223"/>
        <dbReference type="ChEBI" id="CHEBI:58885"/>
        <dbReference type="ChEBI" id="CHEBI:143576"/>
        <dbReference type="EC" id="2.4.1.115"/>
    </reaction>
</comment>
<comment type="pathway">
    <text>Pigment biosynthesis; anthocyanin biosynthesis.</text>
</comment>
<comment type="similarity">
    <text evidence="4">Belongs to the UDP-glycosyltransferase family.</text>
</comment>
<feature type="chain" id="PRO_0000074150" description="Anthocyanidin 3-O-glucosyltransferase">
    <location>
        <begin position="1"/>
        <end position="433"/>
    </location>
</feature>
<feature type="active site" description="Proton acceptor" evidence="2">
    <location>
        <position position="18"/>
    </location>
</feature>
<feature type="active site" description="Charge relay" evidence="2">
    <location>
        <position position="114"/>
    </location>
</feature>
<feature type="binding site" evidence="3">
    <location>
        <position position="18"/>
    </location>
    <ligand>
        <name>an anthocyanidin</name>
        <dbReference type="ChEBI" id="CHEBI:143576"/>
    </ligand>
</feature>
<feature type="binding site" evidence="2">
    <location>
        <position position="137"/>
    </location>
    <ligand>
        <name>UDP-alpha-D-glucose</name>
        <dbReference type="ChEBI" id="CHEBI:58885"/>
    </ligand>
</feature>
<feature type="binding site" evidence="3">
    <location>
        <position position="146"/>
    </location>
    <ligand>
        <name>an anthocyanidin</name>
        <dbReference type="ChEBI" id="CHEBI:143576"/>
    </ligand>
</feature>
<feature type="binding site" evidence="2">
    <location>
        <position position="320"/>
    </location>
    <ligand>
        <name>UDP-alpha-D-glucose</name>
        <dbReference type="ChEBI" id="CHEBI:58885"/>
    </ligand>
</feature>
<feature type="binding site" evidence="2">
    <location>
        <position position="322"/>
    </location>
    <ligand>
        <name>UDP-alpha-D-glucose</name>
        <dbReference type="ChEBI" id="CHEBI:58885"/>
    </ligand>
</feature>
<feature type="binding site" evidence="2">
    <location>
        <position position="337"/>
    </location>
    <ligand>
        <name>UDP-alpha-D-glucose</name>
        <dbReference type="ChEBI" id="CHEBI:58885"/>
    </ligand>
</feature>
<feature type="binding site" evidence="2">
    <location>
        <position position="340"/>
    </location>
    <ligand>
        <name>UDP-alpha-D-glucose</name>
        <dbReference type="ChEBI" id="CHEBI:58885"/>
    </ligand>
</feature>
<feature type="binding site" evidence="2">
    <location>
        <position position="341"/>
    </location>
    <ligand>
        <name>UDP-alpha-D-glucose</name>
        <dbReference type="ChEBI" id="CHEBI:58885"/>
    </ligand>
</feature>
<feature type="binding site" evidence="2">
    <location>
        <position position="342"/>
    </location>
    <ligand>
        <name>UDP-alpha-D-glucose</name>
        <dbReference type="ChEBI" id="CHEBI:58885"/>
    </ligand>
</feature>
<feature type="binding site" evidence="2">
    <location>
        <position position="345"/>
    </location>
    <ligand>
        <name>UDP-alpha-D-glucose</name>
        <dbReference type="ChEBI" id="CHEBI:58885"/>
    </ligand>
</feature>
<feature type="binding site" evidence="3">
    <location>
        <position position="360"/>
    </location>
    <ligand>
        <name>an anthocyanidin</name>
        <dbReference type="ChEBI" id="CHEBI:143576"/>
    </ligand>
</feature>
<feature type="binding site" evidence="2">
    <location>
        <position position="361"/>
    </location>
    <ligand>
        <name>UDP-alpha-D-glucose</name>
        <dbReference type="ChEBI" id="CHEBI:58885"/>
    </ligand>
</feature>
<feature type="binding site" evidence="2">
    <location>
        <position position="362"/>
    </location>
    <ligand>
        <name>UDP-alpha-D-glucose</name>
        <dbReference type="ChEBI" id="CHEBI:58885"/>
    </ligand>
</feature>
<sequence>MTTSQLHIAFLAFPFGTHATPLLTLVQKISPFLPSSTIFSFFNTSSSNSSIFSKVPNQENIKIYNVWDGVKEGNDTPFGLEAIKLFIQSTLLISKITEEAEEETGVKFSCIFSDAFLWCFLVKLPKKMNAPGVAYWTGGSCSLAVHLYTDLIRSNKETSLKIPGFSSTLSINDIPPEVTAEDLEGPMSSMLYNMALNLHKADAVVLNSFQELDRDPLINKDLQKNLQKVFNIGPLVLQSSRKLDESGCIQWLDKQKEKSVVYLSFGTVTTLPPNEIGSIAEALETKKTPFIWSLRNNGVKNLPKGFLERTKEFGKIVSWAPQLEILAHKSVGVFVTHCGWNSILEGISFGVPMICRPFFGDQKLNSRMVESVWEIGLQIEGGIFTKSGIISALDTFFNEEKGKILRENVEGLKEKALEAVNQMMEVQQKISRF</sequence>
<organism>
    <name type="scientific">Solanum melongena</name>
    <name type="common">Eggplant</name>
    <name type="synonym">Aubergine</name>
    <dbReference type="NCBI Taxonomy" id="223891"/>
    <lineage>
        <taxon>Eukaryota</taxon>
        <taxon>Viridiplantae</taxon>
        <taxon>Streptophyta</taxon>
        <taxon>Embryophyta</taxon>
        <taxon>Tracheophyta</taxon>
        <taxon>Spermatophyta</taxon>
        <taxon>Magnoliopsida</taxon>
        <taxon>eudicotyledons</taxon>
        <taxon>Gunneridae</taxon>
        <taxon>Pentapetalae</taxon>
        <taxon>asterids</taxon>
        <taxon>lamiids</taxon>
        <taxon>Solanales</taxon>
        <taxon>Solanaceae</taxon>
        <taxon>Solanoideae</taxon>
        <taxon>Solaneae</taxon>
        <taxon>Solanum</taxon>
    </lineage>
</organism>
<accession>Q43641</accession>
<proteinExistence type="evidence at transcript level"/>
<reference key="1">
    <citation type="submission" date="1994-12" db="EMBL/GenBank/DDBJ databases">
        <authorList>
            <person name="Toguri T."/>
        </authorList>
    </citation>
    <scope>NUCLEOTIDE SEQUENCE [MRNA]</scope>
    <source>
        <strain>cv. Sinsadoharanasu</strain>
        <tissue>Hypocotyl</tissue>
    </source>
</reference>
<gene>
    <name type="primary">GT</name>
    <name type="synonym">UGT76</name>
</gene>